<proteinExistence type="inferred from homology"/>
<dbReference type="EC" id="2.1.2.11" evidence="1"/>
<dbReference type="EMBL" id="CP001217">
    <property type="protein sequence ID" value="ACJ07543.1"/>
    <property type="molecule type" value="Genomic_DNA"/>
</dbReference>
<dbReference type="SMR" id="B6JKW5"/>
<dbReference type="KEGG" id="hpp:HPP12_0386"/>
<dbReference type="HOGENOM" id="CLU_036645_1_0_7"/>
<dbReference type="UniPathway" id="UPA00028">
    <property type="reaction ID" value="UER00003"/>
</dbReference>
<dbReference type="Proteomes" id="UP000008198">
    <property type="component" value="Chromosome"/>
</dbReference>
<dbReference type="GO" id="GO:0005737">
    <property type="term" value="C:cytoplasm"/>
    <property type="evidence" value="ECO:0007669"/>
    <property type="project" value="UniProtKB-SubCell"/>
</dbReference>
<dbReference type="GO" id="GO:0003864">
    <property type="term" value="F:3-methyl-2-oxobutanoate hydroxymethyltransferase activity"/>
    <property type="evidence" value="ECO:0007669"/>
    <property type="project" value="UniProtKB-UniRule"/>
</dbReference>
<dbReference type="GO" id="GO:0000287">
    <property type="term" value="F:magnesium ion binding"/>
    <property type="evidence" value="ECO:0007669"/>
    <property type="project" value="TreeGrafter"/>
</dbReference>
<dbReference type="GO" id="GO:0015940">
    <property type="term" value="P:pantothenate biosynthetic process"/>
    <property type="evidence" value="ECO:0007669"/>
    <property type="project" value="UniProtKB-UniRule"/>
</dbReference>
<dbReference type="CDD" id="cd06557">
    <property type="entry name" value="KPHMT-like"/>
    <property type="match status" value="1"/>
</dbReference>
<dbReference type="FunFam" id="3.20.20.60:FF:000041">
    <property type="entry name" value="3-methyl-2-oxobutanoate hydroxymethyltransferase"/>
    <property type="match status" value="1"/>
</dbReference>
<dbReference type="Gene3D" id="3.20.20.60">
    <property type="entry name" value="Phosphoenolpyruvate-binding domains"/>
    <property type="match status" value="1"/>
</dbReference>
<dbReference type="HAMAP" id="MF_00156">
    <property type="entry name" value="PanB"/>
    <property type="match status" value="1"/>
</dbReference>
<dbReference type="InterPro" id="IPR003700">
    <property type="entry name" value="Pantoate_hydroxy_MeTrfase"/>
</dbReference>
<dbReference type="InterPro" id="IPR015813">
    <property type="entry name" value="Pyrv/PenolPyrv_kinase-like_dom"/>
</dbReference>
<dbReference type="InterPro" id="IPR040442">
    <property type="entry name" value="Pyrv_kinase-like_dom_sf"/>
</dbReference>
<dbReference type="NCBIfam" id="TIGR00222">
    <property type="entry name" value="panB"/>
    <property type="match status" value="1"/>
</dbReference>
<dbReference type="NCBIfam" id="NF001452">
    <property type="entry name" value="PRK00311.1"/>
    <property type="match status" value="1"/>
</dbReference>
<dbReference type="PANTHER" id="PTHR20881">
    <property type="entry name" value="3-METHYL-2-OXOBUTANOATE HYDROXYMETHYLTRANSFERASE"/>
    <property type="match status" value="1"/>
</dbReference>
<dbReference type="PANTHER" id="PTHR20881:SF0">
    <property type="entry name" value="3-METHYL-2-OXOBUTANOATE HYDROXYMETHYLTRANSFERASE"/>
    <property type="match status" value="1"/>
</dbReference>
<dbReference type="Pfam" id="PF02548">
    <property type="entry name" value="Pantoate_transf"/>
    <property type="match status" value="1"/>
</dbReference>
<dbReference type="PIRSF" id="PIRSF000388">
    <property type="entry name" value="Pantoate_hydroxy_MeTrfase"/>
    <property type="match status" value="1"/>
</dbReference>
<dbReference type="SUPFAM" id="SSF51621">
    <property type="entry name" value="Phosphoenolpyruvate/pyruvate domain"/>
    <property type="match status" value="1"/>
</dbReference>
<accession>B6JKW5</accession>
<gene>
    <name evidence="1" type="primary">panB</name>
    <name type="ordered locus">HPP12_0386</name>
</gene>
<protein>
    <recommendedName>
        <fullName evidence="1">3-methyl-2-oxobutanoate hydroxymethyltransferase</fullName>
        <ecNumber evidence="1">2.1.2.11</ecNumber>
    </recommendedName>
    <alternativeName>
        <fullName evidence="1">Ketopantoate hydroxymethyltransferase</fullName>
        <shortName evidence="1">KPHMT</shortName>
    </alternativeName>
</protein>
<sequence>MSMQTAPIKKTTLNHLQAKKNQEKIIAITAYDALFAQIFDPLVDVILVGDSLNMSFFNQNDTLSASVEMMLYHTKAVCAGAKTPFIITDMPFGSYKDEKTALKNAIRVYKETQASAIKLEGGKEKAKLVKTLTDEGVIVVGHIGLMPQFVRLDGGYKIKGKNEEQQKKLLEDALSLEEAGVGLLVLEGITTPIAQKITQKIKIPTIGIGSGKDCDGQILVWSDMLGFFDSFKPKFVREYLKGKELVQNAIKQYADDVKKGNFPNELESYH</sequence>
<comment type="function">
    <text evidence="1">Catalyzes the reversible reaction in which hydroxymethyl group from 5,10-methylenetetrahydrofolate is transferred onto alpha-ketoisovalerate to form ketopantoate.</text>
</comment>
<comment type="catalytic activity">
    <reaction evidence="1">
        <text>3-methyl-2-oxobutanoate + (6R)-5,10-methylene-5,6,7,8-tetrahydrofolate + H2O = 2-dehydropantoate + (6S)-5,6,7,8-tetrahydrofolate</text>
        <dbReference type="Rhea" id="RHEA:11824"/>
        <dbReference type="ChEBI" id="CHEBI:11561"/>
        <dbReference type="ChEBI" id="CHEBI:11851"/>
        <dbReference type="ChEBI" id="CHEBI:15377"/>
        <dbReference type="ChEBI" id="CHEBI:15636"/>
        <dbReference type="ChEBI" id="CHEBI:57453"/>
        <dbReference type="EC" id="2.1.2.11"/>
    </reaction>
</comment>
<comment type="cofactor">
    <cofactor evidence="1">
        <name>Mg(2+)</name>
        <dbReference type="ChEBI" id="CHEBI:18420"/>
    </cofactor>
    <text evidence="1">Binds 1 Mg(2+) ion per subunit.</text>
</comment>
<comment type="pathway">
    <text evidence="1">Cofactor biosynthesis; (R)-pantothenate biosynthesis; (R)-pantoate from 3-methyl-2-oxobutanoate: step 1/2.</text>
</comment>
<comment type="subunit">
    <text evidence="1">Homodecamer; pentamer of dimers.</text>
</comment>
<comment type="subcellular location">
    <subcellularLocation>
        <location evidence="1">Cytoplasm</location>
    </subcellularLocation>
</comment>
<comment type="similarity">
    <text evidence="1">Belongs to the PanB family.</text>
</comment>
<feature type="chain" id="PRO_1000096972" description="3-methyl-2-oxobutanoate hydroxymethyltransferase">
    <location>
        <begin position="1"/>
        <end position="270"/>
    </location>
</feature>
<feature type="active site" description="Proton acceptor" evidence="1">
    <location>
        <position position="187"/>
    </location>
</feature>
<feature type="binding site" evidence="1">
    <location>
        <begin position="50"/>
        <end position="51"/>
    </location>
    <ligand>
        <name>3-methyl-2-oxobutanoate</name>
        <dbReference type="ChEBI" id="CHEBI:11851"/>
    </ligand>
</feature>
<feature type="binding site" evidence="1">
    <location>
        <position position="50"/>
    </location>
    <ligand>
        <name>Mg(2+)</name>
        <dbReference type="ChEBI" id="CHEBI:18420"/>
    </ligand>
</feature>
<feature type="binding site" evidence="1">
    <location>
        <position position="89"/>
    </location>
    <ligand>
        <name>3-methyl-2-oxobutanoate</name>
        <dbReference type="ChEBI" id="CHEBI:11851"/>
    </ligand>
</feature>
<feature type="binding site" evidence="1">
    <location>
        <position position="89"/>
    </location>
    <ligand>
        <name>Mg(2+)</name>
        <dbReference type="ChEBI" id="CHEBI:18420"/>
    </ligand>
</feature>
<feature type="binding site" evidence="1">
    <location>
        <position position="118"/>
    </location>
    <ligand>
        <name>3-methyl-2-oxobutanoate</name>
        <dbReference type="ChEBI" id="CHEBI:11851"/>
    </ligand>
</feature>
<feature type="binding site" evidence="1">
    <location>
        <position position="120"/>
    </location>
    <ligand>
        <name>Mg(2+)</name>
        <dbReference type="ChEBI" id="CHEBI:18420"/>
    </ligand>
</feature>
<reference key="1">
    <citation type="submission" date="2008-10" db="EMBL/GenBank/DDBJ databases">
        <title>The complete genome sequence of Helicobacter pylori strain P12.</title>
        <authorList>
            <person name="Fischer W."/>
            <person name="Windhager L."/>
            <person name="Karnholz A."/>
            <person name="Zeiller M."/>
            <person name="Zimmer R."/>
            <person name="Haas R."/>
        </authorList>
    </citation>
    <scope>NUCLEOTIDE SEQUENCE [LARGE SCALE GENOMIC DNA]</scope>
    <source>
        <strain>P12</strain>
    </source>
</reference>
<keyword id="KW-0963">Cytoplasm</keyword>
<keyword id="KW-0460">Magnesium</keyword>
<keyword id="KW-0479">Metal-binding</keyword>
<keyword id="KW-0566">Pantothenate biosynthesis</keyword>
<keyword id="KW-0808">Transferase</keyword>
<name>PANB_HELP2</name>
<evidence type="ECO:0000255" key="1">
    <source>
        <dbReference type="HAMAP-Rule" id="MF_00156"/>
    </source>
</evidence>
<organism>
    <name type="scientific">Helicobacter pylori (strain P12)</name>
    <dbReference type="NCBI Taxonomy" id="570508"/>
    <lineage>
        <taxon>Bacteria</taxon>
        <taxon>Pseudomonadati</taxon>
        <taxon>Campylobacterota</taxon>
        <taxon>Epsilonproteobacteria</taxon>
        <taxon>Campylobacterales</taxon>
        <taxon>Helicobacteraceae</taxon>
        <taxon>Helicobacter</taxon>
    </lineage>
</organism>